<evidence type="ECO:0000269" key="1">
    <source>
    </source>
</evidence>
<evidence type="ECO:0000269" key="2">
    <source>
    </source>
</evidence>
<evidence type="ECO:0000269" key="3">
    <source>
    </source>
</evidence>
<evidence type="ECO:0000269" key="4">
    <source>
    </source>
</evidence>
<evidence type="ECO:0000269" key="5">
    <source>
    </source>
</evidence>
<evidence type="ECO:0000269" key="6">
    <source>
    </source>
</evidence>
<evidence type="ECO:0000303" key="7">
    <source>
    </source>
</evidence>
<evidence type="ECO:0000303" key="8">
    <source>
    </source>
</evidence>
<evidence type="ECO:0000303" key="9">
    <source>
    </source>
</evidence>
<evidence type="ECO:0000303" key="10">
    <source>
    </source>
</evidence>
<evidence type="ECO:0000305" key="11"/>
<evidence type="ECO:0000305" key="12">
    <source>
    </source>
</evidence>
<evidence type="ECO:0007744" key="13">
    <source>
        <dbReference type="PDB" id="1MO9"/>
    </source>
</evidence>
<evidence type="ECO:0007744" key="14">
    <source>
        <dbReference type="PDB" id="1MOK"/>
    </source>
</evidence>
<evidence type="ECO:0007744" key="15">
    <source>
        <dbReference type="PDB" id="2C3C"/>
    </source>
</evidence>
<evidence type="ECO:0007744" key="16">
    <source>
        <dbReference type="PDB" id="2C3D"/>
    </source>
</evidence>
<evidence type="ECO:0007744" key="17">
    <source>
        <dbReference type="PDB" id="3Q6J"/>
    </source>
</evidence>
<evidence type="ECO:0007829" key="18">
    <source>
        <dbReference type="PDB" id="1MO9"/>
    </source>
</evidence>
<evidence type="ECO:0007829" key="19">
    <source>
        <dbReference type="PDB" id="1MOK"/>
    </source>
</evidence>
<evidence type="ECO:0007829" key="20">
    <source>
        <dbReference type="PDB" id="7MGN"/>
    </source>
</evidence>
<name>XECC_XANP2</name>
<proteinExistence type="evidence at protein level"/>
<sequence length="523" mass="57348">MKVWNARNDHLTINQWATRIDEILEAPDGGEVIYNVDENDPREYDAIFIGGGAAGRFGSAYLRAMGGRQLIVDRWPFLGGSCPHNACVPHHLFSDCAAELMLARTFSGQYWFPDMTEKVVGIKEVVDLFRAGRNGPHGIMNFQSKEQLNLEYILNCPAKVIDNHTVEAAGKVFKAKNLILAVGAGPGTLDVPGVNAKGVFDHATLVEELDYEPGSTVVVVGGSKTAVEYGCFFNATGRRTVMLVRTEPLKLIKDNETRAYVLDRMKEQGMEIISGSNVTRIEEDANGRVQAVVAMTPNGEMRIETDFVFLGLGEQPRSAELAKILGLDLGPKGEVLVNEYLQTSVPNVYAVGDLIGGPMEMFKARKSGCYAARNVMGEKISYTPKNYPDFLHTHYEVSFLGMGEEEARAAGHEIVTIKMPPDTENGLNVALPASDRTMLYAFGKGTAHMSGFQKIVIDAKTRKVLGAHHVGYGAKDAFQYLNVLIKQGLTVDELGDMDELFLNPTHFIQLSRLRAGSKNLVSL</sequence>
<accession>Q56839</accession>
<accession>A7IPY2</accession>
<comment type="function">
    <text evidence="1 6">Involved in aliphatic epoxide carboxylation (PubMed:10411892, PubMed:9150202). Catalyzes the reductive cleavage of the thioether bond of 2-oxopropyl-coenzyme M (2-KPC), and the subsequent carboxylation of the ketopropyl cleavage product, yielding the products acetoacetate and free coenzyme M (PubMed:10411892).</text>
</comment>
<comment type="catalytic activity">
    <reaction evidence="1">
        <text>coenzyme M + acetoacetate + NADP(+) = 2-oxopropyl-coenzyme M + CO2 + NADPH</text>
        <dbReference type="Rhea" id="RHEA:16977"/>
        <dbReference type="ChEBI" id="CHEBI:13705"/>
        <dbReference type="ChEBI" id="CHEBI:16526"/>
        <dbReference type="ChEBI" id="CHEBI:57552"/>
        <dbReference type="ChEBI" id="CHEBI:57783"/>
        <dbReference type="ChEBI" id="CHEBI:58319"/>
        <dbReference type="ChEBI" id="CHEBI:58349"/>
        <dbReference type="EC" id="1.8.1.5"/>
    </reaction>
    <physiologicalReaction direction="right-to-left" evidence="1">
        <dbReference type="Rhea" id="RHEA:16979"/>
    </physiologicalReaction>
</comment>
<comment type="cofactor">
    <cofactor evidence="6">
        <name>FAD</name>
        <dbReference type="ChEBI" id="CHEBI:57692"/>
    </cofactor>
    <text evidence="6">Binds 1 FAD per subunit.</text>
</comment>
<comment type="activity regulation">
    <text evidence="4">Inhibited (at 40%) by the coenzyme M analog 2-bromoethanesulfonate (BES). BES is a time-dependent inactivator of dithiothreitol-reduced 2-KPCC, where the redox active cysteines are in the free thiol forms. BES does not inactivate air-oxidized 2-KPCC, where the redox active cysteine pair is in the disulfide form. BES specifically alkylates the interchange thiol that facilitates thioether bond cleavage and enolacetone formation during catalysis.</text>
</comment>
<comment type="pathway">
    <text evidence="1 6">Alkene metabolism; propylene degradation.</text>
</comment>
<comment type="subunit">
    <text evidence="1 2 6">Homodimer (PubMed:12390015, PubMed:9150202). Component II of the aliphatic epoxide carboxylation complex together with components I, III and IV (PubMed:10411892, PubMed:9150202).</text>
</comment>
<comment type="domain">
    <text evidence="2 3">Contains three domains, the FAD binding domain, the NADPH binding domain, and the dimerization domain (PubMed:12390015). The binding of the substrate induces a conformational change that results in the sequestration of the substrate at the dimer interface (PubMed:12390015, PubMed:16388586).</text>
</comment>
<comment type="miscellaneous">
    <text evidence="2 3">The active site is a redox-active disulfide bond (PubMed:12390015, PubMed:16388586). 2-KPC reduction and carboxylation assumes the formation of a mixed disulfide between the interchange thiol (Cys-82) and coenzyme M (PubMed:16388586).</text>
</comment>
<comment type="similarity">
    <text evidence="11">Belongs to the class-I pyridine nucleotide-disulfide oxidoreductase family.</text>
</comment>
<organism>
    <name type="scientific">Xanthobacter autotrophicus (strain ATCC BAA-1158 / Py2)</name>
    <dbReference type="NCBI Taxonomy" id="78245"/>
    <lineage>
        <taxon>Bacteria</taxon>
        <taxon>Pseudomonadati</taxon>
        <taxon>Pseudomonadota</taxon>
        <taxon>Alphaproteobacteria</taxon>
        <taxon>Hyphomicrobiales</taxon>
        <taxon>Xanthobacteraceae</taxon>
        <taxon>Xanthobacter</taxon>
    </lineage>
</organism>
<keyword id="KW-0002">3D-structure</keyword>
<keyword id="KW-1015">Disulfide bond</keyword>
<keyword id="KW-0274">FAD</keyword>
<keyword id="KW-0285">Flavoprotein</keyword>
<keyword id="KW-0521">NADP</keyword>
<keyword id="KW-0560">Oxidoreductase</keyword>
<keyword id="KW-0614">Plasmid</keyword>
<keyword id="KW-0676">Redox-active center</keyword>
<keyword id="KW-1185">Reference proteome</keyword>
<protein>
    <recommendedName>
        <fullName evidence="11">2-oxopropyl-CoM reductase, carboxylating</fullName>
        <ecNumber evidence="1">1.8.1.5</ecNumber>
    </recommendedName>
    <alternativeName>
        <fullName evidence="8">2-ketopropyl-coenzyme M oxidoreductase/carboxylase</fullName>
    </alternativeName>
    <alternativeName>
        <fullName>Aliphatic epoxide carboxylation component II</fullName>
    </alternativeName>
    <alternativeName>
        <fullName evidence="10">Epoxide carboxylase component II</fullName>
    </alternativeName>
    <alternativeName>
        <fullName evidence="7">NADPH:2-ketopropyl-CoM oxidoreductase/carboxylase</fullName>
        <shortName evidence="9">2-KPCC</shortName>
    </alternativeName>
</protein>
<dbReference type="EC" id="1.8.1.5" evidence="1"/>
<dbReference type="EMBL" id="X79863">
    <property type="protein sequence ID" value="CAA56243.1"/>
    <property type="molecule type" value="Genomic_DNA"/>
</dbReference>
<dbReference type="EMBL" id="CP000782">
    <property type="protein sequence ID" value="ABS70078.1"/>
    <property type="molecule type" value="Genomic_DNA"/>
</dbReference>
<dbReference type="PIR" id="S47053">
    <property type="entry name" value="S47053"/>
</dbReference>
<dbReference type="PDB" id="1MO9">
    <property type="method" value="X-ray"/>
    <property type="resolution" value="1.65 A"/>
    <property type="chains" value="A/B=1-523"/>
</dbReference>
<dbReference type="PDB" id="1MOK">
    <property type="method" value="X-ray"/>
    <property type="resolution" value="2.80 A"/>
    <property type="chains" value="A/B/C/D=1-523"/>
</dbReference>
<dbReference type="PDB" id="2C3C">
    <property type="method" value="X-ray"/>
    <property type="resolution" value="2.15 A"/>
    <property type="chains" value="A/B=1-523"/>
</dbReference>
<dbReference type="PDB" id="2C3D">
    <property type="method" value="X-ray"/>
    <property type="resolution" value="2.15 A"/>
    <property type="chains" value="A/B=1-523"/>
</dbReference>
<dbReference type="PDB" id="3Q6J">
    <property type="method" value="X-ray"/>
    <property type="resolution" value="1.92 A"/>
    <property type="chains" value="A/B=1-523"/>
</dbReference>
<dbReference type="PDB" id="7MGN">
    <property type="method" value="X-ray"/>
    <property type="resolution" value="1.80 A"/>
    <property type="chains" value="A/B=1-523"/>
</dbReference>
<dbReference type="PDB" id="7MGO">
    <property type="method" value="X-ray"/>
    <property type="resolution" value="1.85 A"/>
    <property type="chains" value="A/B=1-523"/>
</dbReference>
<dbReference type="PDBsum" id="1MO9"/>
<dbReference type="PDBsum" id="1MOK"/>
<dbReference type="PDBsum" id="2C3C"/>
<dbReference type="PDBsum" id="2C3D"/>
<dbReference type="PDBsum" id="3Q6J"/>
<dbReference type="PDBsum" id="7MGN"/>
<dbReference type="PDBsum" id="7MGO"/>
<dbReference type="SMR" id="Q56839"/>
<dbReference type="MINT" id="Q56839"/>
<dbReference type="DrugBank" id="DB03163">
    <property type="generic name" value="2-oxopropyl-CoM"/>
</dbReference>
<dbReference type="DrugBank" id="DB03147">
    <property type="generic name" value="Flavin adenine dinucleotide"/>
</dbReference>
<dbReference type="KEGG" id="xau:Xaut_4867"/>
<dbReference type="eggNOG" id="COG1249">
    <property type="taxonomic scope" value="Bacteria"/>
</dbReference>
<dbReference type="HOGENOM" id="CLU_520687_0_0_5"/>
<dbReference type="OrthoDB" id="7809559at2"/>
<dbReference type="PhylomeDB" id="Q56839"/>
<dbReference type="BioCyc" id="MetaCyc:MONOMER-8022"/>
<dbReference type="BRENDA" id="1.8.1.5">
    <property type="organism ID" value="1641"/>
</dbReference>
<dbReference type="UniPathway" id="UPA00776"/>
<dbReference type="EvolutionaryTrace" id="Q56839"/>
<dbReference type="Proteomes" id="UP000002417">
    <property type="component" value="Plasmid pXAUT01"/>
</dbReference>
<dbReference type="GO" id="GO:0050628">
    <property type="term" value="F:2-oxopropyl-CoM reductase (carboxylating) activity"/>
    <property type="evidence" value="ECO:0007669"/>
    <property type="project" value="UniProtKB-EC"/>
</dbReference>
<dbReference type="GO" id="GO:0042208">
    <property type="term" value="P:propylene catabolic process"/>
    <property type="evidence" value="ECO:0007669"/>
    <property type="project" value="UniProtKB-UniPathway"/>
</dbReference>
<dbReference type="Gene3D" id="3.30.390.30">
    <property type="match status" value="1"/>
</dbReference>
<dbReference type="Gene3D" id="3.50.50.60">
    <property type="entry name" value="FAD/NAD(P)-binding domain"/>
    <property type="match status" value="2"/>
</dbReference>
<dbReference type="InterPro" id="IPR036188">
    <property type="entry name" value="FAD/NAD-bd_sf"/>
</dbReference>
<dbReference type="InterPro" id="IPR023753">
    <property type="entry name" value="FAD/NAD-binding_dom"/>
</dbReference>
<dbReference type="InterPro" id="IPR016156">
    <property type="entry name" value="FAD/NAD-linked_Rdtase_dimer_sf"/>
</dbReference>
<dbReference type="InterPro" id="IPR004099">
    <property type="entry name" value="Pyr_nucl-diS_OxRdtase_dimer"/>
</dbReference>
<dbReference type="PANTHER" id="PTHR43014:SF5">
    <property type="entry name" value="GLUTATHIONE REDUCTASE (NADPH)"/>
    <property type="match status" value="1"/>
</dbReference>
<dbReference type="PANTHER" id="PTHR43014">
    <property type="entry name" value="MERCURIC REDUCTASE"/>
    <property type="match status" value="1"/>
</dbReference>
<dbReference type="Pfam" id="PF07992">
    <property type="entry name" value="Pyr_redox_2"/>
    <property type="match status" value="1"/>
</dbReference>
<dbReference type="Pfam" id="PF02852">
    <property type="entry name" value="Pyr_redox_dim"/>
    <property type="match status" value="1"/>
</dbReference>
<dbReference type="PRINTS" id="PR00368">
    <property type="entry name" value="FADPNR"/>
</dbReference>
<dbReference type="PRINTS" id="PR00411">
    <property type="entry name" value="PNDRDTASEI"/>
</dbReference>
<dbReference type="SUPFAM" id="SSF51905">
    <property type="entry name" value="FAD/NAD(P)-binding domain"/>
    <property type="match status" value="1"/>
</dbReference>
<dbReference type="SUPFAM" id="SSF55424">
    <property type="entry name" value="FAD/NAD-linked reductases, dimerisation (C-terminal) domain"/>
    <property type="match status" value="1"/>
</dbReference>
<reference key="1">
    <citation type="journal article" date="1995" name="Microbiology">
        <title>Complementation of Xanthobacter Py2 mutants in epoxyalkane degradation; expression and nucleotide sequence of the complementing DNA fragment.</title>
        <authorList>
            <person name="Swaving J."/>
            <person name="Weijers C.A.G.M."/>
            <person name="van Ooyen A.J.J."/>
            <person name="de Bont J.A.M."/>
        </authorList>
    </citation>
    <scope>NUCLEOTIDE SEQUENCE [GENOMIC DNA]</scope>
    <source>
        <strain>ATCC BAA-1158 / Py2</strain>
    </source>
</reference>
<reference key="2">
    <citation type="submission" date="2007-07" db="EMBL/GenBank/DDBJ databases">
        <title>Complete sequence of plasmid pXAUT01 of Xanthobacter autotrophicus Py2.</title>
        <authorList>
            <consortium name="US DOE Joint Genome Institute"/>
            <person name="Copeland A."/>
            <person name="Lucas S."/>
            <person name="Lapidus A."/>
            <person name="Barry K."/>
            <person name="Glavina del Rio T."/>
            <person name="Hammon N."/>
            <person name="Israni S."/>
            <person name="Dalin E."/>
            <person name="Tice H."/>
            <person name="Pitluck S."/>
            <person name="Sims D."/>
            <person name="Brettin T."/>
            <person name="Bruce D."/>
            <person name="Detter J.C."/>
            <person name="Han C."/>
            <person name="Tapia R."/>
            <person name="Brainard J."/>
            <person name="Schmutz J."/>
            <person name="Larimer F."/>
            <person name="Land M."/>
            <person name="Hauser L."/>
            <person name="Kyrpides N."/>
            <person name="Kim E."/>
            <person name="Ensigns S.A."/>
            <person name="Richardson P."/>
        </authorList>
    </citation>
    <scope>NUCLEOTIDE SEQUENCE [LARGE SCALE GENOMIC DNA]</scope>
    <source>
        <strain>ATCC BAA-1158 / Py2</strain>
    </source>
</reference>
<reference key="3">
    <citation type="journal article" date="1997" name="J. Bacteriol.">
        <title>Characterization of three protein components required for functional reconstitution of the epoxide carboxylase multienzyme complex from Xanthobacter strain Py2.</title>
        <authorList>
            <person name="Allen J.R."/>
            <person name="Ensign S.A."/>
        </authorList>
    </citation>
    <scope>FUNCTION</scope>
    <scope>COFACTOR</scope>
    <scope>PATHWAY</scope>
    <scope>SUBUNIT</scope>
    <source>
        <strain>ATCC BAA-1158 / Py2</strain>
    </source>
</reference>
<reference key="4">
    <citation type="journal article" date="1999" name="Proc. Natl. Acad. Sci. U.S.A.">
        <title>A role for coenzyme M (2-mercaptoethanesulfonic acid) in a bacterial pathway of aliphatic epoxide carboxylation.</title>
        <authorList>
            <person name="Allen J.R."/>
            <person name="Clark D.D."/>
            <person name="Krum J.G."/>
            <person name="Ensign S.A."/>
        </authorList>
    </citation>
    <scope>FUNCTION</scope>
    <scope>CATALYTIC ACTIVITY</scope>
    <scope>PATHWAY</scope>
    <scope>SUBUNIT</scope>
    <source>
        <strain>ATCC BAA-1158 / Py2</strain>
    </source>
</reference>
<reference key="5">
    <citation type="journal article" date="2010" name="J. Biol. Chem.">
        <title>Mechanism of inhibition of aliphatic epoxide carboxylation by the coenzyme M analog 2-bromoethanesulfonate.</title>
        <authorList>
            <person name="Boyd J.M."/>
            <person name="Clark D.D."/>
            <person name="Kofoed M.A."/>
            <person name="Ensign S.A."/>
        </authorList>
    </citation>
    <scope>ACTIVITY REGULATION</scope>
    <source>
        <strain>ATCC BAA-1158 / Py2</strain>
    </source>
</reference>
<reference key="6">
    <citation type="journal article" date="2003" name="Annu. Rev. Biochem.">
        <title>Aliphatic epoxide carboxylation.</title>
        <authorList>
            <person name="Ensign S.A."/>
            <person name="Allen J.R."/>
        </authorList>
    </citation>
    <scope>REVIEW</scope>
</reference>
<reference evidence="13 14" key="7">
    <citation type="journal article" date="2002" name="Biochemistry">
        <title>Structural basis for CO2 fixation by a novel member of the disulfide oxidoreductase family of enzymes, 2-ketopropyl-coenzyme M oxidoreductase/carboxylase.</title>
        <authorList>
            <person name="Nocek B."/>
            <person name="Jang S.B."/>
            <person name="Jeong M.S."/>
            <person name="Clark D.D."/>
            <person name="Ensign S.A."/>
            <person name="Peters J.W."/>
        </authorList>
    </citation>
    <scope>X-RAY CRYSTALLOGRAPHY (1.65 ANGSTROMS) IN COMPLEXES WITH 2-OXOPROPYL-COENZYME M AND FAD</scope>
    <scope>SUBUNIT</scope>
    <scope>DOMAIN</scope>
    <scope>DISULFIDE BOND</scope>
    <source>
        <strain>ATCC BAA-1158 / Py2</strain>
    </source>
</reference>
<reference evidence="15 16" key="8">
    <citation type="journal article" date="2006" name="Biochemistry">
        <title>Mechanistic implications of the structure of the mixed-disulfide intermediate of the disulfide oxidoreductase, 2-ketopropyl-coenzyme M oxidoreductase/carboxylase.</title>
        <authorList>
            <person name="Pandey A.S."/>
            <person name="Nocek B."/>
            <person name="Clark D.D."/>
            <person name="Ensign S.A."/>
            <person name="Peters J.W."/>
        </authorList>
    </citation>
    <scope>X-RAY CRYSTALLOGRAPHY (2.15 ANGSTROMS) IN COMPLEXES WITH COENZYME M; FAD AND NADP</scope>
    <scope>DOMAIN</scope>
    <scope>DISULFIDE BOND</scope>
    <scope>REACTION MECHANISM</scope>
    <source>
        <strain>ATCC BAA-1158 / Py2</strain>
    </source>
</reference>
<reference evidence="17" key="9">
    <citation type="journal article" date="2011" name="FEBS Lett.">
        <title>Structural basis for carbon dioxide binding by 2-ketopropyl coenzyme M oxidoreductase/carboxylase.</title>
        <authorList>
            <person name="Pandey A.S."/>
            <person name="Mulder D.W."/>
            <person name="Ensign S.A."/>
            <person name="Peters J.W."/>
        </authorList>
    </citation>
    <scope>X-RAY CRYSTALLOGRAPHY (1.92 ANGSTROMS) IN COMPLEX WITH 2-OXOPROPYL-COENZYME M; COENZYME M; FAD; CARBON DIOXIDE; MAGNESIUM AND NADP</scope>
    <scope>REACTION MECHANISM</scope>
    <source>
        <strain>ATCC BAA-1158 / Py2</strain>
    </source>
</reference>
<geneLocation type="plasmid">
    <name>pXAUT01</name>
</geneLocation>
<gene>
    <name evidence="9" type="primary">xecC</name>
    <name type="ordered locus">Xaut_4867</name>
</gene>
<feature type="chain" id="PRO_0000068006" description="2-oxopropyl-CoM reductase, carboxylating">
    <location>
        <begin position="1"/>
        <end position="523"/>
    </location>
</feature>
<feature type="binding site" evidence="2 3 5 13 14 15 16 17">
    <location>
        <begin position="53"/>
        <end position="54"/>
    </location>
    <ligand>
        <name>FAD</name>
        <dbReference type="ChEBI" id="CHEBI:57692"/>
    </ligand>
</feature>
<feature type="binding site" evidence="2 5 12 13 17">
    <location>
        <position position="56"/>
    </location>
    <ligand>
        <name>2-oxopropyl-coenzyme M</name>
        <dbReference type="ChEBI" id="CHEBI:57552"/>
    </ligand>
</feature>
<feature type="binding site" evidence="2 3 5 13 14 15 16 17">
    <location>
        <position position="81"/>
    </location>
    <ligand>
        <name>FAD</name>
        <dbReference type="ChEBI" id="CHEBI:57692"/>
    </ligand>
</feature>
<feature type="binding site" evidence="5 12 17">
    <location>
        <position position="82"/>
    </location>
    <ligand>
        <name>2-oxopropyl-coenzyme M</name>
        <dbReference type="ChEBI" id="CHEBI:57552"/>
    </ligand>
</feature>
<feature type="binding site" evidence="2 3 5 13 14 15 16 17">
    <location>
        <position position="158"/>
    </location>
    <ligand>
        <name>FAD</name>
        <dbReference type="ChEBI" id="CHEBI:57692"/>
    </ligand>
</feature>
<feature type="binding site" evidence="3 5 15 17">
    <location>
        <begin position="222"/>
        <end position="225"/>
    </location>
    <ligand>
        <name>NADP(+)</name>
        <dbReference type="ChEBI" id="CHEBI:58349"/>
    </ligand>
</feature>
<feature type="binding site" evidence="3 5 15 17">
    <location>
        <begin position="245"/>
        <end position="246"/>
    </location>
    <ligand>
        <name>NADP(+)</name>
        <dbReference type="ChEBI" id="CHEBI:58349"/>
    </ligand>
</feature>
<feature type="binding site" evidence="2 3 5 13 14 15 16 17">
    <location>
        <position position="353"/>
    </location>
    <ligand>
        <name>FAD</name>
        <dbReference type="ChEBI" id="CHEBI:57692"/>
    </ligand>
</feature>
<feature type="binding site" evidence="3 5 15 17">
    <location>
        <position position="360"/>
    </location>
    <ligand>
        <name>NADP(+)</name>
        <dbReference type="ChEBI" id="CHEBI:58349"/>
    </ligand>
</feature>
<feature type="binding site" evidence="2 3 5 13 14 15 16 17">
    <location>
        <position position="361"/>
    </location>
    <ligand>
        <name>FAD</name>
        <dbReference type="ChEBI" id="CHEBI:57692"/>
    </ligand>
</feature>
<feature type="binding site" evidence="2 5 12 13 17">
    <location>
        <position position="365"/>
    </location>
    <ligand>
        <name>2-oxopropyl-coenzyme M</name>
        <dbReference type="ChEBI" id="CHEBI:57552"/>
    </ligand>
</feature>
<feature type="binding site" evidence="2 3 5 13 14 15 16 17">
    <location>
        <position position="501"/>
    </location>
    <ligand>
        <name>FAD</name>
        <dbReference type="ChEBI" id="CHEBI:57692"/>
    </ligand>
</feature>
<feature type="disulfide bond" description="Redox-active" evidence="2 3">
    <location>
        <begin position="82"/>
        <end position="87"/>
    </location>
</feature>
<feature type="strand" evidence="18">
    <location>
        <begin position="3"/>
        <end position="5"/>
    </location>
</feature>
<feature type="turn" evidence="19">
    <location>
        <begin position="7"/>
        <end position="9"/>
    </location>
</feature>
<feature type="helix" evidence="18">
    <location>
        <begin position="13"/>
        <end position="25"/>
    </location>
</feature>
<feature type="strand" evidence="18">
    <location>
        <begin position="32"/>
        <end position="35"/>
    </location>
</feature>
<feature type="strand" evidence="18">
    <location>
        <begin position="44"/>
        <end position="49"/>
    </location>
</feature>
<feature type="helix" evidence="18">
    <location>
        <begin position="53"/>
        <end position="64"/>
    </location>
</feature>
<feature type="strand" evidence="18">
    <location>
        <begin position="69"/>
        <end position="79"/>
    </location>
</feature>
<feature type="helix" evidence="18">
    <location>
        <begin position="81"/>
        <end position="85"/>
    </location>
</feature>
<feature type="helix" evidence="18">
    <location>
        <begin position="87"/>
        <end position="105"/>
    </location>
</feature>
<feature type="turn" evidence="18">
    <location>
        <begin position="106"/>
        <end position="108"/>
    </location>
</feature>
<feature type="helix" evidence="18">
    <location>
        <begin position="122"/>
        <end position="132"/>
    </location>
</feature>
<feature type="helix" evidence="18">
    <location>
        <begin position="134"/>
        <end position="146"/>
    </location>
</feature>
<feature type="strand" evidence="18">
    <location>
        <begin position="152"/>
        <end position="156"/>
    </location>
</feature>
<feature type="strand" evidence="18">
    <location>
        <begin position="159"/>
        <end position="162"/>
    </location>
</feature>
<feature type="strand" evidence="18">
    <location>
        <begin position="165"/>
        <end position="168"/>
    </location>
</feature>
<feature type="strand" evidence="18">
    <location>
        <begin position="171"/>
        <end position="176"/>
    </location>
</feature>
<feature type="strand" evidence="18">
    <location>
        <begin position="178"/>
        <end position="180"/>
    </location>
</feature>
<feature type="strand" evidence="20">
    <location>
        <begin position="184"/>
        <end position="186"/>
    </location>
</feature>
<feature type="turn" evidence="18">
    <location>
        <begin position="192"/>
        <end position="195"/>
    </location>
</feature>
<feature type="strand" evidence="18">
    <location>
        <begin position="199"/>
        <end position="201"/>
    </location>
</feature>
<feature type="helix" evidence="18">
    <location>
        <begin position="202"/>
        <end position="208"/>
    </location>
</feature>
<feature type="strand" evidence="18">
    <location>
        <begin position="215"/>
        <end position="220"/>
    </location>
</feature>
<feature type="helix" evidence="18">
    <location>
        <begin position="224"/>
        <end position="235"/>
    </location>
</feature>
<feature type="strand" evidence="18">
    <location>
        <begin position="239"/>
        <end position="243"/>
    </location>
</feature>
<feature type="turn" evidence="18">
    <location>
        <begin position="248"/>
        <end position="251"/>
    </location>
</feature>
<feature type="helix" evidence="18">
    <location>
        <begin position="255"/>
        <end position="267"/>
    </location>
</feature>
<feature type="strand" evidence="18">
    <location>
        <begin position="271"/>
        <end position="275"/>
    </location>
</feature>
<feature type="strand" evidence="18">
    <location>
        <begin position="277"/>
        <end position="283"/>
    </location>
</feature>
<feature type="strand" evidence="18">
    <location>
        <begin position="287"/>
        <end position="296"/>
    </location>
</feature>
<feature type="strand" evidence="18">
    <location>
        <begin position="299"/>
        <end position="304"/>
    </location>
</feature>
<feature type="strand" evidence="18">
    <location>
        <begin position="308"/>
        <end position="310"/>
    </location>
</feature>
<feature type="strand" evidence="20">
    <location>
        <begin position="314"/>
        <end position="316"/>
    </location>
</feature>
<feature type="helix" evidence="18">
    <location>
        <begin position="319"/>
        <end position="325"/>
    </location>
</feature>
<feature type="strand" evidence="18">
    <location>
        <begin position="348"/>
        <end position="350"/>
    </location>
</feature>
<feature type="helix" evidence="18">
    <location>
        <begin position="352"/>
        <end position="355"/>
    </location>
</feature>
<feature type="helix" evidence="18">
    <location>
        <begin position="361"/>
        <end position="375"/>
    </location>
</feature>
<feature type="strand" evidence="18">
    <location>
        <begin position="389"/>
        <end position="401"/>
    </location>
</feature>
<feature type="helix" evidence="18">
    <location>
        <begin position="404"/>
        <end position="409"/>
    </location>
</feature>
<feature type="strand" evidence="18">
    <location>
        <begin position="414"/>
        <end position="420"/>
    </location>
</feature>
<feature type="turn" evidence="18">
    <location>
        <begin position="424"/>
        <end position="427"/>
    </location>
</feature>
<feature type="turn" evidence="18">
    <location>
        <begin position="435"/>
        <end position="437"/>
    </location>
</feature>
<feature type="helix" evidence="18">
    <location>
        <begin position="438"/>
        <end position="442"/>
    </location>
</feature>
<feature type="turn" evidence="18">
    <location>
        <begin position="444"/>
        <end position="446"/>
    </location>
</feature>
<feature type="helix" evidence="18">
    <location>
        <begin position="447"/>
        <end position="450"/>
    </location>
</feature>
<feature type="strand" evidence="18">
    <location>
        <begin position="452"/>
        <end position="458"/>
    </location>
</feature>
<feature type="turn" evidence="18">
    <location>
        <begin position="459"/>
        <end position="461"/>
    </location>
</feature>
<feature type="strand" evidence="18">
    <location>
        <begin position="463"/>
        <end position="473"/>
    </location>
</feature>
<feature type="helix" evidence="18">
    <location>
        <begin position="475"/>
        <end position="486"/>
    </location>
</feature>
<feature type="helix" evidence="18">
    <location>
        <begin position="491"/>
        <end position="495"/>
    </location>
</feature>
<feature type="helix" evidence="18">
    <location>
        <begin position="507"/>
        <end position="514"/>
    </location>
</feature>
<feature type="strand" evidence="20">
    <location>
        <begin position="517"/>
        <end position="519"/>
    </location>
</feature>